<organism>
    <name type="scientific">Alkalilimnicola ehrlichii (strain ATCC BAA-1101 / DSM 17681 / MLHE-1)</name>
    <dbReference type="NCBI Taxonomy" id="187272"/>
    <lineage>
        <taxon>Bacteria</taxon>
        <taxon>Pseudomonadati</taxon>
        <taxon>Pseudomonadota</taxon>
        <taxon>Gammaproteobacteria</taxon>
        <taxon>Chromatiales</taxon>
        <taxon>Ectothiorhodospiraceae</taxon>
        <taxon>Alkalilimnicola</taxon>
    </lineage>
</organism>
<protein>
    <recommendedName>
        <fullName evidence="1">ATP-dependent protease subunit HslV</fullName>
        <ecNumber evidence="1">3.4.25.2</ecNumber>
    </recommendedName>
</protein>
<accession>Q0ACL4</accession>
<comment type="function">
    <text evidence="1">Protease subunit of a proteasome-like degradation complex believed to be a general protein degrading machinery.</text>
</comment>
<comment type="catalytic activity">
    <reaction evidence="1">
        <text>ATP-dependent cleavage of peptide bonds with broad specificity.</text>
        <dbReference type="EC" id="3.4.25.2"/>
    </reaction>
</comment>
<comment type="activity regulation">
    <text evidence="1">Allosterically activated by HslU binding.</text>
</comment>
<comment type="subunit">
    <text evidence="1">A double ring-shaped homohexamer of HslV is capped on each side by a ring-shaped HslU homohexamer. The assembly of the HslU/HslV complex is dependent on binding of ATP.</text>
</comment>
<comment type="subcellular location">
    <subcellularLocation>
        <location evidence="1">Cytoplasm</location>
    </subcellularLocation>
</comment>
<comment type="similarity">
    <text evidence="1">Belongs to the peptidase T1B family. HslV subfamily.</text>
</comment>
<keyword id="KW-0021">Allosteric enzyme</keyword>
<keyword id="KW-0963">Cytoplasm</keyword>
<keyword id="KW-0378">Hydrolase</keyword>
<keyword id="KW-0479">Metal-binding</keyword>
<keyword id="KW-0645">Protease</keyword>
<keyword id="KW-1185">Reference proteome</keyword>
<keyword id="KW-0915">Sodium</keyword>
<keyword id="KW-0888">Threonine protease</keyword>
<proteinExistence type="inferred from homology"/>
<gene>
    <name evidence="1" type="primary">hslV</name>
    <name type="ordered locus">Mlg_0066</name>
</gene>
<sequence>MEQFRGTTILAARRDGQVVIGGDGQVTLGHTVMKGNARKVRRLHNGRVLAGFAGGTADAFTLFERFEGQLEKYRGNLTRAAVEMAKDWRSDRVLRRLEALLIVADREAMLVISGNGDVIDPEDDLVAIGSGGPYAQAAATALMRHSQLSARELVEQALGIAGDICIYTNRNLSIEELGPDSED</sequence>
<dbReference type="EC" id="3.4.25.2" evidence="1"/>
<dbReference type="EMBL" id="CP000453">
    <property type="protein sequence ID" value="ABI55423.1"/>
    <property type="molecule type" value="Genomic_DNA"/>
</dbReference>
<dbReference type="RefSeq" id="WP_011627819.1">
    <property type="nucleotide sequence ID" value="NC_008340.1"/>
</dbReference>
<dbReference type="SMR" id="Q0ACL4"/>
<dbReference type="MEROPS" id="T01.006"/>
<dbReference type="KEGG" id="aeh:Mlg_0066"/>
<dbReference type="eggNOG" id="COG5405">
    <property type="taxonomic scope" value="Bacteria"/>
</dbReference>
<dbReference type="HOGENOM" id="CLU_093872_1_0_6"/>
<dbReference type="OrthoDB" id="9804884at2"/>
<dbReference type="Proteomes" id="UP000001962">
    <property type="component" value="Chromosome"/>
</dbReference>
<dbReference type="GO" id="GO:0009376">
    <property type="term" value="C:HslUV protease complex"/>
    <property type="evidence" value="ECO:0007669"/>
    <property type="project" value="UniProtKB-UniRule"/>
</dbReference>
<dbReference type="GO" id="GO:0005839">
    <property type="term" value="C:proteasome core complex"/>
    <property type="evidence" value="ECO:0007669"/>
    <property type="project" value="InterPro"/>
</dbReference>
<dbReference type="GO" id="GO:0046872">
    <property type="term" value="F:metal ion binding"/>
    <property type="evidence" value="ECO:0007669"/>
    <property type="project" value="UniProtKB-KW"/>
</dbReference>
<dbReference type="GO" id="GO:0004298">
    <property type="term" value="F:threonine-type endopeptidase activity"/>
    <property type="evidence" value="ECO:0007669"/>
    <property type="project" value="UniProtKB-KW"/>
</dbReference>
<dbReference type="GO" id="GO:0051603">
    <property type="term" value="P:proteolysis involved in protein catabolic process"/>
    <property type="evidence" value="ECO:0007669"/>
    <property type="project" value="InterPro"/>
</dbReference>
<dbReference type="CDD" id="cd01913">
    <property type="entry name" value="protease_HslV"/>
    <property type="match status" value="1"/>
</dbReference>
<dbReference type="FunFam" id="3.60.20.10:FF:000002">
    <property type="entry name" value="ATP-dependent protease subunit HslV"/>
    <property type="match status" value="1"/>
</dbReference>
<dbReference type="Gene3D" id="3.60.20.10">
    <property type="entry name" value="Glutamine Phosphoribosylpyrophosphate, subunit 1, domain 1"/>
    <property type="match status" value="1"/>
</dbReference>
<dbReference type="HAMAP" id="MF_00248">
    <property type="entry name" value="HslV"/>
    <property type="match status" value="1"/>
</dbReference>
<dbReference type="InterPro" id="IPR022281">
    <property type="entry name" value="ATP-dep_Prtase_HsIV_su"/>
</dbReference>
<dbReference type="InterPro" id="IPR029055">
    <property type="entry name" value="Ntn_hydrolases_N"/>
</dbReference>
<dbReference type="InterPro" id="IPR001353">
    <property type="entry name" value="Proteasome_sua/b"/>
</dbReference>
<dbReference type="InterPro" id="IPR023333">
    <property type="entry name" value="Proteasome_suB-type"/>
</dbReference>
<dbReference type="NCBIfam" id="TIGR03692">
    <property type="entry name" value="ATP_dep_HslV"/>
    <property type="match status" value="1"/>
</dbReference>
<dbReference type="NCBIfam" id="NF003964">
    <property type="entry name" value="PRK05456.1"/>
    <property type="match status" value="1"/>
</dbReference>
<dbReference type="PANTHER" id="PTHR32194:SF0">
    <property type="entry name" value="ATP-DEPENDENT PROTEASE SUBUNIT HSLV"/>
    <property type="match status" value="1"/>
</dbReference>
<dbReference type="PANTHER" id="PTHR32194">
    <property type="entry name" value="METALLOPROTEASE TLDD"/>
    <property type="match status" value="1"/>
</dbReference>
<dbReference type="Pfam" id="PF00227">
    <property type="entry name" value="Proteasome"/>
    <property type="match status" value="1"/>
</dbReference>
<dbReference type="PIRSF" id="PIRSF039093">
    <property type="entry name" value="HslV"/>
    <property type="match status" value="1"/>
</dbReference>
<dbReference type="SUPFAM" id="SSF56235">
    <property type="entry name" value="N-terminal nucleophile aminohydrolases (Ntn hydrolases)"/>
    <property type="match status" value="1"/>
</dbReference>
<dbReference type="PROSITE" id="PS51476">
    <property type="entry name" value="PROTEASOME_BETA_2"/>
    <property type="match status" value="1"/>
</dbReference>
<name>HSLV_ALKEH</name>
<feature type="chain" id="PRO_0000336762" description="ATP-dependent protease subunit HslV">
    <location>
        <begin position="1"/>
        <end position="183"/>
    </location>
</feature>
<feature type="active site" evidence="1">
    <location>
        <position position="7"/>
    </location>
</feature>
<feature type="binding site" evidence="1">
    <location>
        <position position="162"/>
    </location>
    <ligand>
        <name>Na(+)</name>
        <dbReference type="ChEBI" id="CHEBI:29101"/>
    </ligand>
</feature>
<feature type="binding site" evidence="1">
    <location>
        <position position="165"/>
    </location>
    <ligand>
        <name>Na(+)</name>
        <dbReference type="ChEBI" id="CHEBI:29101"/>
    </ligand>
</feature>
<feature type="binding site" evidence="1">
    <location>
        <position position="168"/>
    </location>
    <ligand>
        <name>Na(+)</name>
        <dbReference type="ChEBI" id="CHEBI:29101"/>
    </ligand>
</feature>
<reference key="1">
    <citation type="submission" date="2006-08" db="EMBL/GenBank/DDBJ databases">
        <title>Complete sequence of Alkalilimnicola ehrilichei MLHE-1.</title>
        <authorList>
            <person name="Copeland A."/>
            <person name="Lucas S."/>
            <person name="Lapidus A."/>
            <person name="Barry K."/>
            <person name="Detter J.C."/>
            <person name="Glavina del Rio T."/>
            <person name="Hammon N."/>
            <person name="Israni S."/>
            <person name="Dalin E."/>
            <person name="Tice H."/>
            <person name="Pitluck S."/>
            <person name="Sims D."/>
            <person name="Brettin T."/>
            <person name="Bruce D."/>
            <person name="Han C."/>
            <person name="Tapia R."/>
            <person name="Gilna P."/>
            <person name="Schmutz J."/>
            <person name="Larimer F."/>
            <person name="Land M."/>
            <person name="Hauser L."/>
            <person name="Kyrpides N."/>
            <person name="Mikhailova N."/>
            <person name="Oremland R.S."/>
            <person name="Hoeft S.E."/>
            <person name="Switzer-Blum J."/>
            <person name="Kulp T."/>
            <person name="King G."/>
            <person name="Tabita R."/>
            <person name="Witte B."/>
            <person name="Santini J.M."/>
            <person name="Basu P."/>
            <person name="Hollibaugh J.T."/>
            <person name="Xie G."/>
            <person name="Stolz J.F."/>
            <person name="Richardson P."/>
        </authorList>
    </citation>
    <scope>NUCLEOTIDE SEQUENCE [LARGE SCALE GENOMIC DNA]</scope>
    <source>
        <strain>ATCC BAA-1101 / DSM 17681 / MLHE-1</strain>
    </source>
</reference>
<evidence type="ECO:0000255" key="1">
    <source>
        <dbReference type="HAMAP-Rule" id="MF_00248"/>
    </source>
</evidence>